<feature type="chain" id="PRO_0000323356" description="Small ribosomal subunit protein uS11c">
    <location>
        <begin position="1"/>
        <end position="138"/>
    </location>
</feature>
<feature type="region of interest" description="Disordered" evidence="2">
    <location>
        <begin position="1"/>
        <end position="23"/>
    </location>
</feature>
<feature type="compositionally biased region" description="Basic residues" evidence="2">
    <location>
        <begin position="9"/>
        <end position="23"/>
    </location>
</feature>
<sequence>MAKPIPRIGSRKNGRIGSRKSGRRIPKGVIHVQASFNNTIVTVTDVRGRVVSWSSAGTCGFRGTRRGTPFAAQTAAGNAIRTVMDQGMQRAEVMIKGPGLGRDAALRAIRRSGLLLSFVRDVTPMPHNGCRPPKKRRV</sequence>
<geneLocation type="chloroplast"/>
<protein>
    <recommendedName>
        <fullName evidence="1">Small ribosomal subunit protein uS11c</fullName>
    </recommendedName>
    <alternativeName>
        <fullName evidence="3">30S ribosomal protein S11, chloroplastic</fullName>
    </alternativeName>
</protein>
<keyword id="KW-0150">Chloroplast</keyword>
<keyword id="KW-0934">Plastid</keyword>
<keyword id="KW-0687">Ribonucleoprotein</keyword>
<keyword id="KW-0689">Ribosomal protein</keyword>
<keyword id="KW-0694">RNA-binding</keyword>
<keyword id="KW-0699">rRNA-binding</keyword>
<name>RR11_BUXMI</name>
<comment type="subunit">
    <text evidence="1">Part of the 30S ribosomal subunit.</text>
</comment>
<comment type="subcellular location">
    <subcellularLocation>
        <location>Plastid</location>
        <location>Chloroplast</location>
    </subcellularLocation>
</comment>
<comment type="similarity">
    <text evidence="1">Belongs to the universal ribosomal protein uS11 family.</text>
</comment>
<evidence type="ECO:0000255" key="1">
    <source>
        <dbReference type="HAMAP-Rule" id="MF_01310"/>
    </source>
</evidence>
<evidence type="ECO:0000256" key="2">
    <source>
        <dbReference type="SAM" id="MobiDB-lite"/>
    </source>
</evidence>
<evidence type="ECO:0000305" key="3"/>
<proteinExistence type="inferred from homology"/>
<dbReference type="EMBL" id="EF380351">
    <property type="protein sequence ID" value="ABQ45281.1"/>
    <property type="molecule type" value="Genomic_DNA"/>
</dbReference>
<dbReference type="RefSeq" id="YP_001294217.1">
    <property type="nucleotide sequence ID" value="NC_009599.1"/>
</dbReference>
<dbReference type="SMR" id="A6MM69"/>
<dbReference type="GeneID" id="5236953"/>
<dbReference type="GO" id="GO:0009507">
    <property type="term" value="C:chloroplast"/>
    <property type="evidence" value="ECO:0007669"/>
    <property type="project" value="UniProtKB-SubCell"/>
</dbReference>
<dbReference type="GO" id="GO:1990904">
    <property type="term" value="C:ribonucleoprotein complex"/>
    <property type="evidence" value="ECO:0007669"/>
    <property type="project" value="UniProtKB-KW"/>
</dbReference>
<dbReference type="GO" id="GO:0005840">
    <property type="term" value="C:ribosome"/>
    <property type="evidence" value="ECO:0007669"/>
    <property type="project" value="UniProtKB-KW"/>
</dbReference>
<dbReference type="GO" id="GO:0019843">
    <property type="term" value="F:rRNA binding"/>
    <property type="evidence" value="ECO:0007669"/>
    <property type="project" value="UniProtKB-UniRule"/>
</dbReference>
<dbReference type="GO" id="GO:0003735">
    <property type="term" value="F:structural constituent of ribosome"/>
    <property type="evidence" value="ECO:0007669"/>
    <property type="project" value="InterPro"/>
</dbReference>
<dbReference type="GO" id="GO:0006412">
    <property type="term" value="P:translation"/>
    <property type="evidence" value="ECO:0007669"/>
    <property type="project" value="UniProtKB-UniRule"/>
</dbReference>
<dbReference type="FunFam" id="3.30.420.80:FF:000003">
    <property type="entry name" value="30S ribosomal protein S11, chloroplastic"/>
    <property type="match status" value="1"/>
</dbReference>
<dbReference type="Gene3D" id="3.30.420.80">
    <property type="entry name" value="Ribosomal protein S11"/>
    <property type="match status" value="1"/>
</dbReference>
<dbReference type="HAMAP" id="MF_01310">
    <property type="entry name" value="Ribosomal_uS11"/>
    <property type="match status" value="1"/>
</dbReference>
<dbReference type="InterPro" id="IPR001971">
    <property type="entry name" value="Ribosomal_uS11"/>
</dbReference>
<dbReference type="InterPro" id="IPR019981">
    <property type="entry name" value="Ribosomal_uS11_bac-type"/>
</dbReference>
<dbReference type="InterPro" id="IPR018102">
    <property type="entry name" value="Ribosomal_uS11_CS"/>
</dbReference>
<dbReference type="InterPro" id="IPR036967">
    <property type="entry name" value="Ribosomal_uS11_sf"/>
</dbReference>
<dbReference type="NCBIfam" id="NF003698">
    <property type="entry name" value="PRK05309.1"/>
    <property type="match status" value="1"/>
</dbReference>
<dbReference type="NCBIfam" id="TIGR03632">
    <property type="entry name" value="uS11_bact"/>
    <property type="match status" value="1"/>
</dbReference>
<dbReference type="PANTHER" id="PTHR11759">
    <property type="entry name" value="40S RIBOSOMAL PROTEIN S14/30S RIBOSOMAL PROTEIN S11"/>
    <property type="match status" value="1"/>
</dbReference>
<dbReference type="Pfam" id="PF00411">
    <property type="entry name" value="Ribosomal_S11"/>
    <property type="match status" value="1"/>
</dbReference>
<dbReference type="PIRSF" id="PIRSF002131">
    <property type="entry name" value="Ribosomal_S11"/>
    <property type="match status" value="1"/>
</dbReference>
<dbReference type="SUPFAM" id="SSF53137">
    <property type="entry name" value="Translational machinery components"/>
    <property type="match status" value="1"/>
</dbReference>
<dbReference type="PROSITE" id="PS00054">
    <property type="entry name" value="RIBOSOMAL_S11"/>
    <property type="match status" value="1"/>
</dbReference>
<accession>A6MM69</accession>
<organism>
    <name type="scientific">Buxus microphylla</name>
    <name type="common">Littleleaf boxwood</name>
    <name type="synonym">Japanese boxwood</name>
    <dbReference type="NCBI Taxonomy" id="153571"/>
    <lineage>
        <taxon>Eukaryota</taxon>
        <taxon>Viridiplantae</taxon>
        <taxon>Streptophyta</taxon>
        <taxon>Embryophyta</taxon>
        <taxon>Tracheophyta</taxon>
        <taxon>Spermatophyta</taxon>
        <taxon>Magnoliopsida</taxon>
        <taxon>Buxales</taxon>
        <taxon>Buxaceae</taxon>
        <taxon>Buxus</taxon>
    </lineage>
</organism>
<gene>
    <name evidence="1" type="primary">rps11</name>
</gene>
<reference key="1">
    <citation type="journal article" date="2007" name="Mol. Phylogenet. Evol.">
        <title>Phylogenetic and evolutionary implications of complete chloroplast genome sequences of four early-diverging angiosperms: Buxus (Buxaceae), Chloranthus (Chloranthaceae), Dioscorea (Dioscoreaceae), and Illicium (Schisandraceae).</title>
        <authorList>
            <person name="Hansen D.R."/>
            <person name="Dastidar S.G."/>
            <person name="Cai Z."/>
            <person name="Penaflor C."/>
            <person name="Kuehl J.V."/>
            <person name="Boore J.L."/>
            <person name="Jansen R.K."/>
        </authorList>
    </citation>
    <scope>NUCLEOTIDE SEQUENCE [LARGE SCALE GENOMIC DNA]</scope>
</reference>